<gene>
    <name evidence="1" type="primary">tig</name>
    <name type="ordered locus">SPO2288</name>
</gene>
<name>TIG_RUEPO</name>
<evidence type="ECO:0000255" key="1">
    <source>
        <dbReference type="HAMAP-Rule" id="MF_00303"/>
    </source>
</evidence>
<organism>
    <name type="scientific">Ruegeria pomeroyi (strain ATCC 700808 / DSM 15171 / DSS-3)</name>
    <name type="common">Silicibacter pomeroyi</name>
    <dbReference type="NCBI Taxonomy" id="246200"/>
    <lineage>
        <taxon>Bacteria</taxon>
        <taxon>Pseudomonadati</taxon>
        <taxon>Pseudomonadota</taxon>
        <taxon>Alphaproteobacteria</taxon>
        <taxon>Rhodobacterales</taxon>
        <taxon>Roseobacteraceae</taxon>
        <taxon>Ruegeria</taxon>
    </lineage>
</organism>
<comment type="function">
    <text evidence="1">Involved in protein export. Acts as a chaperone by maintaining the newly synthesized protein in an open conformation. Functions as a peptidyl-prolyl cis-trans isomerase.</text>
</comment>
<comment type="catalytic activity">
    <reaction evidence="1">
        <text>[protein]-peptidylproline (omega=180) = [protein]-peptidylproline (omega=0)</text>
        <dbReference type="Rhea" id="RHEA:16237"/>
        <dbReference type="Rhea" id="RHEA-COMP:10747"/>
        <dbReference type="Rhea" id="RHEA-COMP:10748"/>
        <dbReference type="ChEBI" id="CHEBI:83833"/>
        <dbReference type="ChEBI" id="CHEBI:83834"/>
        <dbReference type="EC" id="5.2.1.8"/>
    </reaction>
</comment>
<comment type="subcellular location">
    <subcellularLocation>
        <location>Cytoplasm</location>
    </subcellularLocation>
    <text evidence="1">About half TF is bound to the ribosome near the polypeptide exit tunnel while the other half is free in the cytoplasm.</text>
</comment>
<comment type="domain">
    <text evidence="1">Consists of 3 domains; the N-terminus binds the ribosome, the middle domain has PPIase activity, while the C-terminus has intrinsic chaperone activity on its own.</text>
</comment>
<comment type="similarity">
    <text evidence="1">Belongs to the FKBP-type PPIase family. Tig subfamily.</text>
</comment>
<proteinExistence type="inferred from homology"/>
<keyword id="KW-0131">Cell cycle</keyword>
<keyword id="KW-0132">Cell division</keyword>
<keyword id="KW-0143">Chaperone</keyword>
<keyword id="KW-0963">Cytoplasm</keyword>
<keyword id="KW-0413">Isomerase</keyword>
<keyword id="KW-1185">Reference proteome</keyword>
<keyword id="KW-0697">Rotamase</keyword>
<dbReference type="EC" id="5.2.1.8" evidence="1"/>
<dbReference type="EMBL" id="CP000031">
    <property type="protein sequence ID" value="AAV95552.1"/>
    <property type="molecule type" value="Genomic_DNA"/>
</dbReference>
<dbReference type="RefSeq" id="WP_011048006.1">
    <property type="nucleotide sequence ID" value="NC_003911.12"/>
</dbReference>
<dbReference type="SMR" id="Q5LR43"/>
<dbReference type="STRING" id="246200.SPO2288"/>
<dbReference type="PaxDb" id="246200-SPO2288"/>
<dbReference type="KEGG" id="sil:SPO2288"/>
<dbReference type="eggNOG" id="COG0544">
    <property type="taxonomic scope" value="Bacteria"/>
</dbReference>
<dbReference type="HOGENOM" id="CLU_033058_2_2_5"/>
<dbReference type="OrthoDB" id="9767721at2"/>
<dbReference type="Proteomes" id="UP000001023">
    <property type="component" value="Chromosome"/>
</dbReference>
<dbReference type="GO" id="GO:0005737">
    <property type="term" value="C:cytoplasm"/>
    <property type="evidence" value="ECO:0007669"/>
    <property type="project" value="UniProtKB-SubCell"/>
</dbReference>
<dbReference type="GO" id="GO:0003755">
    <property type="term" value="F:peptidyl-prolyl cis-trans isomerase activity"/>
    <property type="evidence" value="ECO:0007669"/>
    <property type="project" value="UniProtKB-UniRule"/>
</dbReference>
<dbReference type="GO" id="GO:0051301">
    <property type="term" value="P:cell division"/>
    <property type="evidence" value="ECO:0007669"/>
    <property type="project" value="UniProtKB-KW"/>
</dbReference>
<dbReference type="GO" id="GO:0006457">
    <property type="term" value="P:protein folding"/>
    <property type="evidence" value="ECO:0007669"/>
    <property type="project" value="UniProtKB-UniRule"/>
</dbReference>
<dbReference type="GO" id="GO:0015031">
    <property type="term" value="P:protein transport"/>
    <property type="evidence" value="ECO:0007669"/>
    <property type="project" value="UniProtKB-UniRule"/>
</dbReference>
<dbReference type="FunFam" id="3.10.50.40:FF:000001">
    <property type="entry name" value="Trigger factor"/>
    <property type="match status" value="1"/>
</dbReference>
<dbReference type="Gene3D" id="3.10.50.40">
    <property type="match status" value="1"/>
</dbReference>
<dbReference type="Gene3D" id="3.30.70.1050">
    <property type="entry name" value="Trigger factor ribosome-binding domain"/>
    <property type="match status" value="1"/>
</dbReference>
<dbReference type="Gene3D" id="1.10.3120.10">
    <property type="entry name" value="Trigger factor, C-terminal domain"/>
    <property type="match status" value="1"/>
</dbReference>
<dbReference type="HAMAP" id="MF_00303">
    <property type="entry name" value="Trigger_factor_Tig"/>
    <property type="match status" value="1"/>
</dbReference>
<dbReference type="InterPro" id="IPR046357">
    <property type="entry name" value="PPIase_dom_sf"/>
</dbReference>
<dbReference type="InterPro" id="IPR001179">
    <property type="entry name" value="PPIase_FKBP_dom"/>
</dbReference>
<dbReference type="InterPro" id="IPR005215">
    <property type="entry name" value="Trig_fac"/>
</dbReference>
<dbReference type="InterPro" id="IPR008880">
    <property type="entry name" value="Trigger_fac_C"/>
</dbReference>
<dbReference type="InterPro" id="IPR037041">
    <property type="entry name" value="Trigger_fac_C_sf"/>
</dbReference>
<dbReference type="InterPro" id="IPR008881">
    <property type="entry name" value="Trigger_fac_ribosome-bd_bac"/>
</dbReference>
<dbReference type="InterPro" id="IPR036611">
    <property type="entry name" value="Trigger_fac_ribosome-bd_sf"/>
</dbReference>
<dbReference type="InterPro" id="IPR027304">
    <property type="entry name" value="Trigger_fact/SurA_dom_sf"/>
</dbReference>
<dbReference type="NCBIfam" id="TIGR00115">
    <property type="entry name" value="tig"/>
    <property type="match status" value="1"/>
</dbReference>
<dbReference type="Pfam" id="PF00254">
    <property type="entry name" value="FKBP_C"/>
    <property type="match status" value="1"/>
</dbReference>
<dbReference type="Pfam" id="PF05698">
    <property type="entry name" value="Trigger_C"/>
    <property type="match status" value="1"/>
</dbReference>
<dbReference type="Pfam" id="PF05697">
    <property type="entry name" value="Trigger_N"/>
    <property type="match status" value="1"/>
</dbReference>
<dbReference type="PIRSF" id="PIRSF003095">
    <property type="entry name" value="Trigger_factor"/>
    <property type="match status" value="1"/>
</dbReference>
<dbReference type="SUPFAM" id="SSF54534">
    <property type="entry name" value="FKBP-like"/>
    <property type="match status" value="1"/>
</dbReference>
<dbReference type="SUPFAM" id="SSF109998">
    <property type="entry name" value="Triger factor/SurA peptide-binding domain-like"/>
    <property type="match status" value="1"/>
</dbReference>
<dbReference type="SUPFAM" id="SSF102735">
    <property type="entry name" value="Trigger factor ribosome-binding domain"/>
    <property type="match status" value="1"/>
</dbReference>
<dbReference type="PROSITE" id="PS50059">
    <property type="entry name" value="FKBP_PPIASE"/>
    <property type="match status" value="1"/>
</dbReference>
<protein>
    <recommendedName>
        <fullName evidence="1">Trigger factor</fullName>
        <shortName evidence="1">TF</shortName>
        <ecNumber evidence="1">5.2.1.8</ecNumber>
    </recommendedName>
    <alternativeName>
        <fullName evidence="1">PPIase</fullName>
    </alternativeName>
</protein>
<reference key="1">
    <citation type="journal article" date="2004" name="Nature">
        <title>Genome sequence of Silicibacter pomeroyi reveals adaptations to the marine environment.</title>
        <authorList>
            <person name="Moran M.A."/>
            <person name="Buchan A."/>
            <person name="Gonzalez J.M."/>
            <person name="Heidelberg J.F."/>
            <person name="Whitman W.B."/>
            <person name="Kiene R.P."/>
            <person name="Henriksen J.R."/>
            <person name="King G.M."/>
            <person name="Belas R."/>
            <person name="Fuqua C."/>
            <person name="Brinkac L.M."/>
            <person name="Lewis M."/>
            <person name="Johri S."/>
            <person name="Weaver B."/>
            <person name="Pai G."/>
            <person name="Eisen J.A."/>
            <person name="Rahe E."/>
            <person name="Sheldon W.M."/>
            <person name="Ye W."/>
            <person name="Miller T.R."/>
            <person name="Carlton J."/>
            <person name="Rasko D.A."/>
            <person name="Paulsen I.T."/>
            <person name="Ren Q."/>
            <person name="Daugherty S.C."/>
            <person name="DeBoy R.T."/>
            <person name="Dodson R.J."/>
            <person name="Durkin A.S."/>
            <person name="Madupu R."/>
            <person name="Nelson W.C."/>
            <person name="Sullivan S.A."/>
            <person name="Rosovitz M.J."/>
            <person name="Haft D.H."/>
            <person name="Selengut J."/>
            <person name="Ward N."/>
        </authorList>
    </citation>
    <scope>NUCLEOTIDE SEQUENCE [LARGE SCALE GENOMIC DNA]</scope>
    <source>
        <strain>ATCC 700808 / DSM 15171 / DSS-3</strain>
    </source>
</reference>
<reference key="2">
    <citation type="journal article" date="2014" name="Stand. Genomic Sci.">
        <title>An updated genome annotation for the model marine bacterium Ruegeria pomeroyi DSS-3.</title>
        <authorList>
            <person name="Rivers A.R."/>
            <person name="Smith C.B."/>
            <person name="Moran M.A."/>
        </authorList>
    </citation>
    <scope>GENOME REANNOTATION</scope>
    <source>
        <strain>ATCC 700808 / DSM 15171 / DSS-3</strain>
    </source>
</reference>
<sequence>MQVTETLNEGLKRGYNIVVSAAELDAKVNEKLVEAQPEIEMKGFRKGKVPMALLKKQFGQRLLGEAMQETIDGAMNKHFEDSGDRPALQPEVKMTNEDWKEGDDVEVAMSYEALPAIPEVDMSDIALEKLVVKADDAAIDEALGNLAETAQDFKARRKGSKAKDGDQVVMDFVGKVDGEAFEGGSAEDYPLVLGSNSFIPGFEEQLVGVKAEEEKDVTVTFPEEYGAEHLAGKEAVFTCTIKEVKEPVAAEIDDELAKKFGAEDLAALKSQIAERLEAEYAGASRAVMKRGLLDALDAKVSFDLPPSLVDAEAKQIAHQLWHEENPEVHDHNHGEIEATEEHTKLAERRVRLGLLLAELGQKAEVEVTDAEMTQAILGQARQYPGQERQFFEFVQKNPQMQQQLRAPIFEDKVVDHIVAQAKVTEKEISKDDLQKALEALDAE</sequence>
<feature type="chain" id="PRO_0000179424" description="Trigger factor">
    <location>
        <begin position="1"/>
        <end position="443"/>
    </location>
</feature>
<feature type="domain" description="PPIase FKBP-type" evidence="1">
    <location>
        <begin position="165"/>
        <end position="250"/>
    </location>
</feature>
<accession>Q5LR43</accession>